<organism>
    <name type="scientific">Rhodococcus erythropolis</name>
    <name type="common">Arthrobacter picolinophilus</name>
    <dbReference type="NCBI Taxonomy" id="1833"/>
    <lineage>
        <taxon>Bacteria</taxon>
        <taxon>Bacillati</taxon>
        <taxon>Actinomycetota</taxon>
        <taxon>Actinomycetes</taxon>
        <taxon>Mycobacteriales</taxon>
        <taxon>Nocardiaceae</taxon>
        <taxon>Rhodococcus</taxon>
        <taxon>Rhodococcus erythropolis group</taxon>
    </lineage>
</organism>
<dbReference type="EC" id="1.14.14.21" evidence="6 11"/>
<dbReference type="EMBL" id="DQ444325">
    <property type="protein sequence ID" value="ABE26646.1"/>
    <property type="molecule type" value="Genomic_DNA"/>
</dbReference>
<dbReference type="PDB" id="4JEK">
    <property type="method" value="X-ray"/>
    <property type="resolution" value="2.40 A"/>
    <property type="chains" value="A/B/C/D/E/F/G/H=1-417"/>
</dbReference>
<dbReference type="PDB" id="4NXL">
    <property type="method" value="X-ray"/>
    <property type="resolution" value="2.30 A"/>
    <property type="chains" value="A/B/C/D=1-417"/>
</dbReference>
<dbReference type="PDBsum" id="4JEK"/>
<dbReference type="PDBsum" id="4NXL"/>
<dbReference type="SMR" id="Q0ZIH5"/>
<dbReference type="UniPathway" id="UPA00346"/>
<dbReference type="EvolutionaryTrace" id="Q0ZIH5"/>
<dbReference type="GO" id="GO:0005737">
    <property type="term" value="C:cytoplasm"/>
    <property type="evidence" value="ECO:0007669"/>
    <property type="project" value="UniProtKB-SubCell"/>
</dbReference>
<dbReference type="GO" id="GO:0008470">
    <property type="term" value="F:3-methylbutanoyl-CoA dehydrogenase activity"/>
    <property type="evidence" value="ECO:0007669"/>
    <property type="project" value="TreeGrafter"/>
</dbReference>
<dbReference type="GO" id="GO:0050660">
    <property type="term" value="F:flavin adenine dinucleotide binding"/>
    <property type="evidence" value="ECO:0007669"/>
    <property type="project" value="InterPro"/>
</dbReference>
<dbReference type="GO" id="GO:0004497">
    <property type="term" value="F:monooxygenase activity"/>
    <property type="evidence" value="ECO:0007669"/>
    <property type="project" value="UniProtKB-KW"/>
</dbReference>
<dbReference type="GO" id="GO:0018896">
    <property type="term" value="P:dibenzothiophene catabolic process"/>
    <property type="evidence" value="ECO:0007669"/>
    <property type="project" value="UniProtKB-UniPathway"/>
</dbReference>
<dbReference type="GO" id="GO:0006552">
    <property type="term" value="P:L-leucine catabolic process"/>
    <property type="evidence" value="ECO:0007669"/>
    <property type="project" value="TreeGrafter"/>
</dbReference>
<dbReference type="Gene3D" id="1.10.540.10">
    <property type="entry name" value="Acyl-CoA dehydrogenase/oxidase, N-terminal domain"/>
    <property type="match status" value="1"/>
</dbReference>
<dbReference type="Gene3D" id="2.40.110.10">
    <property type="entry name" value="Butyryl-CoA Dehydrogenase, subunit A, domain 2"/>
    <property type="match status" value="1"/>
</dbReference>
<dbReference type="Gene3D" id="1.20.140.10">
    <property type="entry name" value="Butyryl-CoA Dehydrogenase, subunit A, domain 3"/>
    <property type="match status" value="1"/>
</dbReference>
<dbReference type="InterPro" id="IPR013107">
    <property type="entry name" value="Acyl-CoA_DH_C"/>
</dbReference>
<dbReference type="InterPro" id="IPR006091">
    <property type="entry name" value="Acyl-CoA_Oxase/DH_mid-dom"/>
</dbReference>
<dbReference type="InterPro" id="IPR046373">
    <property type="entry name" value="Acyl-CoA_Oxase/DH_mid-dom_sf"/>
</dbReference>
<dbReference type="InterPro" id="IPR036250">
    <property type="entry name" value="AcylCo_DH-like_C"/>
</dbReference>
<dbReference type="InterPro" id="IPR013786">
    <property type="entry name" value="AcylCoA_DH/ox_N"/>
</dbReference>
<dbReference type="InterPro" id="IPR037069">
    <property type="entry name" value="AcylCoA_DH/ox_N_sf"/>
</dbReference>
<dbReference type="InterPro" id="IPR009100">
    <property type="entry name" value="AcylCoA_DH/oxidase_NM_dom_sf"/>
</dbReference>
<dbReference type="PANTHER" id="PTHR43884">
    <property type="entry name" value="ACYL-COA DEHYDROGENASE"/>
    <property type="match status" value="1"/>
</dbReference>
<dbReference type="PANTHER" id="PTHR43884:SF12">
    <property type="entry name" value="ISOVALERYL-COA DEHYDROGENASE, MITOCHONDRIAL-RELATED"/>
    <property type="match status" value="1"/>
</dbReference>
<dbReference type="Pfam" id="PF08028">
    <property type="entry name" value="Acyl-CoA_dh_2"/>
    <property type="match status" value="1"/>
</dbReference>
<dbReference type="Pfam" id="PF02770">
    <property type="entry name" value="Acyl-CoA_dh_M"/>
    <property type="match status" value="1"/>
</dbReference>
<dbReference type="Pfam" id="PF02771">
    <property type="entry name" value="Acyl-CoA_dh_N"/>
    <property type="match status" value="1"/>
</dbReference>
<dbReference type="PIRSF" id="PIRSF016578">
    <property type="entry name" value="HsaA"/>
    <property type="match status" value="1"/>
</dbReference>
<dbReference type="SUPFAM" id="SSF47203">
    <property type="entry name" value="Acyl-CoA dehydrogenase C-terminal domain-like"/>
    <property type="match status" value="1"/>
</dbReference>
<dbReference type="SUPFAM" id="SSF56645">
    <property type="entry name" value="Acyl-CoA dehydrogenase NM domain-like"/>
    <property type="match status" value="1"/>
</dbReference>
<gene>
    <name evidence="7" type="primary">dszC</name>
</gene>
<accession>Q0ZIH5</accession>
<evidence type="ECO:0000250" key="1">
    <source>
        <dbReference type="UniProtKB" id="A0A0C6DRW4"/>
    </source>
</evidence>
<evidence type="ECO:0000269" key="2">
    <source>
    </source>
</evidence>
<evidence type="ECO:0000269" key="3">
    <source>
    </source>
</evidence>
<evidence type="ECO:0000269" key="4">
    <source>
    </source>
</evidence>
<evidence type="ECO:0000269" key="5">
    <source>
    </source>
</evidence>
<evidence type="ECO:0000269" key="6">
    <source>
    </source>
</evidence>
<evidence type="ECO:0000303" key="7">
    <source>
    </source>
</evidence>
<evidence type="ECO:0000303" key="8">
    <source>
    </source>
</evidence>
<evidence type="ECO:0000303" key="9">
    <source>
    </source>
</evidence>
<evidence type="ECO:0000305" key="10"/>
<evidence type="ECO:0000305" key="11">
    <source>
    </source>
</evidence>
<evidence type="ECO:0000305" key="12">
    <source>
    </source>
</evidence>
<evidence type="ECO:0007744" key="13">
    <source>
        <dbReference type="PDB" id="4JEK"/>
    </source>
</evidence>
<evidence type="ECO:0007744" key="14">
    <source>
        <dbReference type="PDB" id="4NXL"/>
    </source>
</evidence>
<evidence type="ECO:0007829" key="15">
    <source>
        <dbReference type="PDB" id="4JEK"/>
    </source>
</evidence>
<evidence type="ECO:0007829" key="16">
    <source>
        <dbReference type="PDB" id="4NXL"/>
    </source>
</evidence>
<comment type="function">
    <text evidence="6 11">Catalyzes the first step of the '4S' desulfurization pathway that removes covalently bound sulfur from dibenzothiophene (DBT) without breaking carbon-carbon bonds. Sulfur dioxygenase which converts DBT to DBT-sulfone (DBTO2 or DBT 5,5-dioxide) in a stepwise manner.</text>
</comment>
<comment type="catalytic activity">
    <reaction evidence="6">
        <text>dibenzothiophene + 2 FMNH2 + 2 O2 = dibenzothiophene 5,5-dioxide + 2 FMN + 2 H2O + 2 H(+)</text>
        <dbReference type="Rhea" id="RHEA:49072"/>
        <dbReference type="ChEBI" id="CHEBI:15377"/>
        <dbReference type="ChEBI" id="CHEBI:15378"/>
        <dbReference type="ChEBI" id="CHEBI:15379"/>
        <dbReference type="ChEBI" id="CHEBI:23681"/>
        <dbReference type="ChEBI" id="CHEBI:57618"/>
        <dbReference type="ChEBI" id="CHEBI:58210"/>
        <dbReference type="ChEBI" id="CHEBI:90356"/>
        <dbReference type="EC" id="1.14.14.21"/>
    </reaction>
</comment>
<comment type="catalytic activity">
    <reaction evidence="12">
        <text>dibenzothiophene + FMNH2 + O2 = dibenzothiophene 5-oxide + FMN + H2O + H(+)</text>
        <dbReference type="Rhea" id="RHEA:49076"/>
        <dbReference type="ChEBI" id="CHEBI:15377"/>
        <dbReference type="ChEBI" id="CHEBI:15378"/>
        <dbReference type="ChEBI" id="CHEBI:15379"/>
        <dbReference type="ChEBI" id="CHEBI:23681"/>
        <dbReference type="ChEBI" id="CHEBI:23683"/>
        <dbReference type="ChEBI" id="CHEBI:57618"/>
        <dbReference type="ChEBI" id="CHEBI:58210"/>
    </reaction>
</comment>
<comment type="catalytic activity">
    <reaction evidence="12">
        <text>dibenzothiophene 5-oxide + FMNH2 + O2 = dibenzothiophene 5,5-dioxide + FMN + H2O + H(+)</text>
        <dbReference type="Rhea" id="RHEA:49080"/>
        <dbReference type="ChEBI" id="CHEBI:15377"/>
        <dbReference type="ChEBI" id="CHEBI:15378"/>
        <dbReference type="ChEBI" id="CHEBI:15379"/>
        <dbReference type="ChEBI" id="CHEBI:23683"/>
        <dbReference type="ChEBI" id="CHEBI:57618"/>
        <dbReference type="ChEBI" id="CHEBI:58210"/>
        <dbReference type="ChEBI" id="CHEBI:90356"/>
    </reaction>
</comment>
<comment type="pathway">
    <text evidence="2">Sulfur metabolism; dibenzothiophene degradation.</text>
</comment>
<comment type="subunit">
    <text evidence="5 6">Homotetramer.</text>
</comment>
<comment type="subcellular location">
    <subcellularLocation>
        <location evidence="10">Cytoplasm</location>
    </subcellularLocation>
</comment>
<comment type="induction">
    <text evidence="3 11">Repressed by HBP or sulfate (Probable). Part of the dszA-dszB-dszC operon. This protein is expressed at high levels (at protein level) (PubMed:17420595).</text>
</comment>
<comment type="domain">
    <text evidence="1 6">Has 3 domains, the helical N-terminus (residues 19-125), a beta-barrel central domain (126-234) and a helical C-terminus (235-409). The C-terminus (410-417) forms part of the substrate-binding pocket with the C-terminal helical domain (PubMed:24975806). The lid loop assumes one of 2 conformations allowing opening and closing of the active site (By similarity).</text>
</comment>
<comment type="biotechnology">
    <text evidence="2 3 4">Expression in B.subtilis confers the ability to remove sulfur from polycyclic aromatic sulfur compounds found in gasoline and diesel (biodesulfurization), which are a considerable source of pollution (PubMed:16810451). Modification of the operon so the start codon of dszB no longer overlaps with the stop codon of dszA leads to increased expression of DszB (in R.erythropolis) and about 5-fold higher levels of desulfurization of DBT (PubMed:17420595). Rearrangement of the operon into the order dszB-dszC-dszA leads to 12-fold higher levels of DBT desulfurization (PubMed:18165370).</text>
</comment>
<comment type="miscellaneous">
    <text evidence="6">Reduced flavin is provided by flavin reductase DszD.</text>
</comment>
<comment type="similarity">
    <text evidence="10">Belongs to the DszC flavin monooxygenase family.</text>
</comment>
<proteinExistence type="evidence at protein level"/>
<sequence length="417" mass="45044">MTLSPEKEHVRPRDAADNDPVAVARGLAEKWRATAVERDRAGGSATAEREDLRASALLSLLVPREYGGWGADWPTAIEVVREIAAADGSLGHLFGYHLTNAPMIELIGSQEQEEHLYTQIAQNNWWTGNASSENNSHELDVKVSATPTEDGGYVLNGTKHFCSGAKGSDLLFVFGVVQDDSPQQGAIIAAAIPTSRAGVTPNDDWAAIGMRQTDSGSTDFHNVKVEPDEVLGAPNAFVLAFIQSERGSLFRPIAQLIFANVYLGIAHGALDAAREYTRTQARPWTPAGIQQATEDPYTIRSYGEFTIALQGADAAAREAAHLVQTVWDKGDALTPEDRGELMAKVSGVKSLATNAALNISSGVFEVIGARGTHPRYGFDRFWRNVRTHSLHDPVSYKIADVGKHTLNGQYPIPGFTS</sequence>
<feature type="chain" id="PRO_0000455398" description="Dibenzothiophene monooxygenase">
    <location>
        <begin position="1"/>
        <end position="417"/>
    </location>
</feature>
<feature type="region of interest" description="Helical N-terminus" evidence="6">
    <location>
        <begin position="19"/>
        <end position="125"/>
    </location>
</feature>
<feature type="region of interest" description="Central beta-barrel N-terminus" evidence="6">
    <location>
        <begin position="126"/>
        <end position="234"/>
    </location>
</feature>
<feature type="region of interest" description="Lid loop" evidence="1">
    <location>
        <begin position="131"/>
        <end position="142"/>
    </location>
</feature>
<feature type="region of interest" description="Helical C-terminus" evidence="6">
    <location>
        <begin position="235"/>
        <end position="409"/>
    </location>
</feature>
<feature type="binding site" evidence="1">
    <location>
        <position position="96"/>
    </location>
    <ligand>
        <name>FMN</name>
        <dbReference type="ChEBI" id="CHEBI:58210"/>
    </ligand>
</feature>
<feature type="binding site" evidence="1">
    <location>
        <begin position="129"/>
        <end position="134"/>
    </location>
    <ligand>
        <name>FMN</name>
        <dbReference type="ChEBI" id="CHEBI:58210"/>
    </ligand>
</feature>
<feature type="binding site" evidence="1">
    <location>
        <begin position="159"/>
        <end position="163"/>
    </location>
    <ligand>
        <name>FMN</name>
        <dbReference type="ChEBI" id="CHEBI:58210"/>
    </ligand>
</feature>
<feature type="binding site" evidence="1">
    <location>
        <position position="282"/>
    </location>
    <ligand>
        <name>FMN</name>
        <dbReference type="ChEBI" id="CHEBI:58210"/>
    </ligand>
</feature>
<feature type="binding site" evidence="1">
    <location>
        <begin position="369"/>
        <end position="370"/>
    </location>
    <ligand>
        <name>FMN</name>
        <dbReference type="ChEBI" id="CHEBI:58210"/>
    </ligand>
</feature>
<feature type="binding site" evidence="1">
    <location>
        <position position="391"/>
    </location>
    <ligand>
        <name>FMN</name>
        <dbReference type="ChEBI" id="CHEBI:58210"/>
    </ligand>
</feature>
<feature type="mutagenesis site" description="Nearly wild-type catalytic activity." evidence="6">
    <original>Y</original>
    <variation>A</variation>
    <location>
        <position position="96"/>
    </location>
</feature>
<feature type="mutagenesis site" description="Loss of catalytic activity." evidence="6">
    <original>N</original>
    <variation>A</variation>
    <location>
        <position position="129"/>
    </location>
</feature>
<feature type="mutagenesis site" description="Loss of catalytic activity." evidence="6">
    <original>F</original>
    <variation>A</variation>
    <location>
        <position position="161"/>
    </location>
</feature>
<feature type="mutagenesis site" description="Loss of catalytic activity." evidence="6">
    <original>S</original>
    <variation>A</variation>
    <location>
        <position position="163"/>
    </location>
</feature>
<feature type="mutagenesis site" description="Loss of catalytic activity." evidence="6">
    <original>W</original>
    <variation>A</variation>
    <location>
        <position position="205"/>
    </location>
</feature>
<feature type="mutagenesis site" description="Loss of catalytic activity." evidence="6">
    <original>S</original>
    <variation>A</variation>
    <location>
        <position position="215"/>
    </location>
</feature>
<feature type="mutagenesis site" description="Near to total loss of catalytic activity." evidence="6">
    <original>F</original>
    <variation>A</variation>
    <variation>R</variation>
    <location>
        <position position="250"/>
    </location>
</feature>
<feature type="mutagenesis site" description="Loss of catalytic activity, does not form tetramers." evidence="6">
    <original>R</original>
    <variation>A</variation>
    <location>
        <position position="338"/>
    </location>
</feature>
<feature type="mutagenesis site" description="Loss of catalytic activity." evidence="6">
    <original>H</original>
    <variation>A</variation>
    <location>
        <position position="391"/>
    </location>
</feature>
<feature type="mutagenesis site" description="Loss of catalytic activity, does not form tetramers." evidence="6">
    <location>
        <begin position="410"/>
        <end position="417"/>
    </location>
</feature>
<feature type="mutagenesis site" description="Decreased catalytic activity, still forms tetramers." evidence="6">
    <original>F</original>
    <variation>A</variation>
    <location>
        <position position="415"/>
    </location>
</feature>
<feature type="mutagenesis site" description="Decreased catalytic activity, still forms tetramers." evidence="6">
    <original>T</original>
    <variation>A</variation>
    <location>
        <position position="416"/>
    </location>
</feature>
<feature type="mutagenesis site" description="Nearly wild-type catalytic activity, still forms tetramers." evidence="6">
    <original>S</original>
    <variation>A</variation>
    <location>
        <position position="417"/>
    </location>
</feature>
<feature type="helix" evidence="16">
    <location>
        <begin position="20"/>
        <end position="31"/>
    </location>
</feature>
<feature type="helix" evidence="16">
    <location>
        <begin position="32"/>
        <end position="34"/>
    </location>
</feature>
<feature type="helix" evidence="16">
    <location>
        <begin position="35"/>
        <end position="41"/>
    </location>
</feature>
<feature type="helix" evidence="16">
    <location>
        <begin position="46"/>
        <end position="55"/>
    </location>
</feature>
<feature type="helix" evidence="16">
    <location>
        <begin position="57"/>
        <end position="59"/>
    </location>
</feature>
<feature type="helix" evidence="16">
    <location>
        <begin position="64"/>
        <end position="66"/>
    </location>
</feature>
<feature type="helix" evidence="16">
    <location>
        <begin position="73"/>
        <end position="86"/>
    </location>
</feature>
<feature type="helix" evidence="16">
    <location>
        <begin position="88"/>
        <end position="100"/>
    </location>
</feature>
<feature type="helix" evidence="16">
    <location>
        <begin position="102"/>
        <end position="107"/>
    </location>
</feature>
<feature type="helix" evidence="16">
    <location>
        <begin position="110"/>
        <end position="123"/>
    </location>
</feature>
<feature type="strand" evidence="16">
    <location>
        <begin position="127"/>
        <end position="130"/>
    </location>
</feature>
<feature type="helix" evidence="16">
    <location>
        <begin position="138"/>
        <end position="140"/>
    </location>
</feature>
<feature type="strand" evidence="16">
    <location>
        <begin position="144"/>
        <end position="147"/>
    </location>
</feature>
<feature type="strand" evidence="16">
    <location>
        <begin position="153"/>
        <end position="161"/>
    </location>
</feature>
<feature type="turn" evidence="16">
    <location>
        <begin position="165"/>
        <end position="167"/>
    </location>
</feature>
<feature type="strand" evidence="16">
    <location>
        <begin position="169"/>
        <end position="176"/>
    </location>
</feature>
<feature type="strand" evidence="16">
    <location>
        <begin position="179"/>
        <end position="181"/>
    </location>
</feature>
<feature type="turn" evidence="16">
    <location>
        <begin position="182"/>
        <end position="185"/>
    </location>
</feature>
<feature type="strand" evidence="16">
    <location>
        <begin position="187"/>
        <end position="193"/>
    </location>
</feature>
<feature type="strand" evidence="16">
    <location>
        <begin position="199"/>
        <end position="201"/>
    </location>
</feature>
<feature type="strand" evidence="16">
    <location>
        <begin position="208"/>
        <end position="210"/>
    </location>
</feature>
<feature type="strand" evidence="16">
    <location>
        <begin position="218"/>
        <end position="225"/>
    </location>
</feature>
<feature type="helix" evidence="16">
    <location>
        <begin position="227"/>
        <end position="229"/>
    </location>
</feature>
<feature type="strand" evidence="15">
    <location>
        <begin position="230"/>
        <end position="233"/>
    </location>
</feature>
<feature type="helix" evidence="16">
    <location>
        <begin position="236"/>
        <end position="243"/>
    </location>
</feature>
<feature type="helix" evidence="16">
    <location>
        <begin position="246"/>
        <end position="249"/>
    </location>
</feature>
<feature type="helix" evidence="16">
    <location>
        <begin position="250"/>
        <end position="279"/>
    </location>
</feature>
<feature type="helix" evidence="16">
    <location>
        <begin position="285"/>
        <end position="287"/>
    </location>
</feature>
<feature type="helix" evidence="16">
    <location>
        <begin position="292"/>
        <end position="294"/>
    </location>
</feature>
<feature type="helix" evidence="16">
    <location>
        <begin position="296"/>
        <end position="327"/>
    </location>
</feature>
<feature type="helix" evidence="16">
    <location>
        <begin position="328"/>
        <end position="332"/>
    </location>
</feature>
<feature type="helix" evidence="16">
    <location>
        <begin position="335"/>
        <end position="367"/>
    </location>
</feature>
<feature type="helix" evidence="16">
    <location>
        <begin position="369"/>
        <end position="372"/>
    </location>
</feature>
<feature type="turn" evidence="16">
    <location>
        <begin position="374"/>
        <end position="376"/>
    </location>
</feature>
<feature type="helix" evidence="16">
    <location>
        <begin position="380"/>
        <end position="388"/>
    </location>
</feature>
<feature type="helix" evidence="16">
    <location>
        <begin position="394"/>
        <end position="407"/>
    </location>
</feature>
<keyword id="KW-0002">3D-structure</keyword>
<keyword id="KW-0963">Cytoplasm</keyword>
<keyword id="KW-0285">Flavoprotein</keyword>
<keyword id="KW-0288">FMN</keyword>
<keyword id="KW-0503">Monooxygenase</keyword>
<keyword id="KW-0547">Nucleotide-binding</keyword>
<keyword id="KW-0560">Oxidoreductase</keyword>
<reference key="1">
    <citation type="journal article" date="2006" name="Biotechnol. Lett.">
        <title>Desulfurization of dibenzothiophene by Bacillus subtilis recombinants carrying dszABC and dszD genes.</title>
        <authorList>
            <person name="Ma T."/>
            <person name="Li G."/>
            <person name="Li J."/>
            <person name="Liang F."/>
            <person name="Liu R."/>
        </authorList>
    </citation>
    <scope>NUCLEOTIDE SEQUENCE [GENOMIC DNA]</scope>
    <scope>PROBABLE FUNCTION</scope>
    <scope>PATHWAY</scope>
    <scope>EXPRESSION IN B.SUBTILIS</scope>
    <scope>INDUCTION</scope>
    <scope>BIOTECHNOLOGY</scope>
    <source>
        <strain>DS-3</strain>
    </source>
</reference>
<reference key="2">
    <citation type="journal article" date="2007" name="Biosci. Biotechnol. Biochem.">
        <title>Improvement of dibenzothiophene desulfurization activity by removing the gene overlap in the dsz operon.</title>
        <authorList>
            <person name="Li G.Q."/>
            <person name="Ma T."/>
            <person name="Li S.S."/>
            <person name="Li H."/>
            <person name="Liang F.L."/>
            <person name="Liu R.L."/>
        </authorList>
    </citation>
    <scope>INDUCTION</scope>
    <scope>BIOTECHNOLOGY</scope>
    <source>
        <strain>DS-3</strain>
    </source>
</reference>
<reference key="3">
    <citation type="journal article" date="2008" name="Appl. Environ. Microbiol.">
        <title>Genetic rearrangement strategy for optimizing the dibenzothiophene biodesulfurization pathway in Rhodococcus erythropolis.</title>
        <authorList>
            <person name="Li G.Q."/>
            <person name="Li S.S."/>
            <person name="Zhang M.L."/>
            <person name="Wang J."/>
            <person name="Zhu L."/>
            <person name="Liang F.L."/>
            <person name="Liu R.L."/>
            <person name="Ma T."/>
        </authorList>
    </citation>
    <scope>BIOTECHNOLOGY</scope>
    <source>
        <strain>DS-3</strain>
    </source>
</reference>
<reference evidence="13" key="4">
    <citation type="journal article" date="2013" name="Acta Crystallogr. F">
        <title>Crystallization and preliminary structural analysis of dibenzothiophene monooxygenase (DszC) from Rhodococcus erythropolis.</title>
        <authorList>
            <person name="Duan X."/>
            <person name="Zhang L."/>
            <person name="Zhou D."/>
            <person name="Ji K."/>
            <person name="Ma T."/>
            <person name="Shui W."/>
            <person name="Li G."/>
            <person name="Li X."/>
        </authorList>
    </citation>
    <scope>X-RAY CRYSTALLOGRAPHY (2.40 ANGSTROMS)</scope>
    <scope>SUBUNIT</scope>
    <source>
        <strain>DS-3</strain>
    </source>
</reference>
<reference evidence="14" key="5">
    <citation type="journal article" date="2014" name="Proteins">
        <title>Structural insights into the stabilization of active, tetrameric DszC by its C-terminus.</title>
        <authorList>
            <person name="Zhang L."/>
            <person name="Duan X."/>
            <person name="Zhou D."/>
            <person name="Dong Z."/>
            <person name="Ji K."/>
            <person name="Meng W."/>
            <person name="Li G."/>
            <person name="Li X."/>
            <person name="Yang H."/>
            <person name="Ma T."/>
            <person name="Rao Z."/>
        </authorList>
    </citation>
    <scope>X-RAY CRYSTALLOGRAPHY (2.30 ANGSTROMS)</scope>
    <scope>FUNCTION</scope>
    <scope>CATALYTIC ACTIVITY</scope>
    <scope>SUBUNIT</scope>
    <scope>DOMAIN</scope>
    <scope>MUTAGENESIS OF TYR-96; ASN-129; PHE-161; SER-163; TRP-205; SER-215; PHE-250; ARG-338; HIS-391; 409-GLN--SER-417; PHE-415; THR-416 AND SER-417</scope>
    <source>
        <strain>DS-3</strain>
    </source>
</reference>
<name>DSZC3_RHOER</name>
<protein>
    <recommendedName>
        <fullName evidence="8">Dibenzothiophene monooxygenase</fullName>
        <shortName evidence="9">DBT monooxygenase</shortName>
        <shortName>DBT-MO</shortName>
        <ecNumber evidence="6 11">1.14.14.21</ecNumber>
    </recommendedName>
</protein>